<protein>
    <recommendedName>
        <fullName>F-box protein At3g19880</fullName>
    </recommendedName>
</protein>
<gene>
    <name type="ordered locus">At3g19880</name>
    <name type="ORF">MPN9.12</name>
</gene>
<name>FB165_ARATH</name>
<reference key="1">
    <citation type="journal article" date="2000" name="DNA Res.">
        <title>Structural analysis of Arabidopsis thaliana chromosome 3. I. Sequence features of the regions of 4,504,864 bp covered by sixty P1 and TAC clones.</title>
        <authorList>
            <person name="Sato S."/>
            <person name="Nakamura Y."/>
            <person name="Kaneko T."/>
            <person name="Katoh T."/>
            <person name="Asamizu E."/>
            <person name="Tabata S."/>
        </authorList>
    </citation>
    <scope>NUCLEOTIDE SEQUENCE [LARGE SCALE GENOMIC DNA]</scope>
    <source>
        <strain>cv. Columbia</strain>
    </source>
</reference>
<reference key="2">
    <citation type="journal article" date="2017" name="Plant J.">
        <title>Araport11: a complete reannotation of the Arabidopsis thaliana reference genome.</title>
        <authorList>
            <person name="Cheng C.Y."/>
            <person name="Krishnakumar V."/>
            <person name="Chan A.P."/>
            <person name="Thibaud-Nissen F."/>
            <person name="Schobel S."/>
            <person name="Town C.D."/>
        </authorList>
    </citation>
    <scope>GENOME REANNOTATION</scope>
    <source>
        <strain>cv. Columbia</strain>
    </source>
</reference>
<reference key="3">
    <citation type="submission" date="2005-05" db="EMBL/GenBank/DDBJ databases">
        <authorList>
            <person name="Underwood B.A."/>
            <person name="Xiao Y.-L."/>
            <person name="Moskal W.A. Jr."/>
            <person name="Monaghan E.L."/>
            <person name="Wang W."/>
            <person name="Redman J.C."/>
            <person name="Wu H.C."/>
            <person name="Utterback T."/>
            <person name="Town C.D."/>
        </authorList>
    </citation>
    <scope>NUCLEOTIDE SEQUENCE [LARGE SCALE MRNA]</scope>
    <source>
        <strain>cv. Columbia</strain>
    </source>
</reference>
<dbReference type="EMBL" id="AB025631">
    <property type="protein sequence ID" value="BAB01302.1"/>
    <property type="molecule type" value="Genomic_DNA"/>
</dbReference>
<dbReference type="EMBL" id="CP002686">
    <property type="protein sequence ID" value="AEE76303.1"/>
    <property type="molecule type" value="Genomic_DNA"/>
</dbReference>
<dbReference type="EMBL" id="DQ056597">
    <property type="protein sequence ID" value="AAY78745.1"/>
    <property type="molecule type" value="mRNA"/>
</dbReference>
<dbReference type="RefSeq" id="NP_188622.1">
    <property type="nucleotide sequence ID" value="NM_112878.1"/>
</dbReference>
<dbReference type="FunCoup" id="Q9LT21">
    <property type="interactions" value="1"/>
</dbReference>
<dbReference type="PaxDb" id="3702-AT3G19880.1"/>
<dbReference type="EnsemblPlants" id="AT3G19880.1">
    <property type="protein sequence ID" value="AT3G19880.1"/>
    <property type="gene ID" value="AT3G19880"/>
</dbReference>
<dbReference type="GeneID" id="821525"/>
<dbReference type="Gramene" id="AT3G19880.1">
    <property type="protein sequence ID" value="AT3G19880.1"/>
    <property type="gene ID" value="AT3G19880"/>
</dbReference>
<dbReference type="KEGG" id="ath:AT3G19880"/>
<dbReference type="Araport" id="AT3G19880"/>
<dbReference type="TAIR" id="AT3G19880"/>
<dbReference type="HOGENOM" id="CLU_034692_0_0_1"/>
<dbReference type="InParanoid" id="Q9LT21"/>
<dbReference type="OMA" id="FMMIDFK"/>
<dbReference type="PhylomeDB" id="Q9LT21"/>
<dbReference type="PRO" id="PR:Q9LT21"/>
<dbReference type="Proteomes" id="UP000006548">
    <property type="component" value="Chromosome 3"/>
</dbReference>
<dbReference type="ExpressionAtlas" id="Q9LT21">
    <property type="expression patterns" value="baseline and differential"/>
</dbReference>
<dbReference type="CDD" id="cd22157">
    <property type="entry name" value="F-box_AtFBW1-like"/>
    <property type="match status" value="1"/>
</dbReference>
<dbReference type="InterPro" id="IPR006527">
    <property type="entry name" value="F-box-assoc_dom_typ1"/>
</dbReference>
<dbReference type="InterPro" id="IPR017451">
    <property type="entry name" value="F-box-assoc_interact_dom"/>
</dbReference>
<dbReference type="InterPro" id="IPR036047">
    <property type="entry name" value="F-box-like_dom_sf"/>
</dbReference>
<dbReference type="InterPro" id="IPR001810">
    <property type="entry name" value="F-box_dom"/>
</dbReference>
<dbReference type="InterPro" id="IPR050796">
    <property type="entry name" value="SCF_F-box_component"/>
</dbReference>
<dbReference type="NCBIfam" id="TIGR01640">
    <property type="entry name" value="F_box_assoc_1"/>
    <property type="match status" value="1"/>
</dbReference>
<dbReference type="PANTHER" id="PTHR31672">
    <property type="entry name" value="BNACNNG10540D PROTEIN"/>
    <property type="match status" value="1"/>
</dbReference>
<dbReference type="PANTHER" id="PTHR31672:SF13">
    <property type="entry name" value="F-BOX PROTEIN CPR30-LIKE"/>
    <property type="match status" value="1"/>
</dbReference>
<dbReference type="Pfam" id="PF00646">
    <property type="entry name" value="F-box"/>
    <property type="match status" value="1"/>
</dbReference>
<dbReference type="Pfam" id="PF07734">
    <property type="entry name" value="FBA_1"/>
    <property type="match status" value="1"/>
</dbReference>
<dbReference type="SMART" id="SM00256">
    <property type="entry name" value="FBOX"/>
    <property type="match status" value="1"/>
</dbReference>
<dbReference type="SUPFAM" id="SSF81383">
    <property type="entry name" value="F-box domain"/>
    <property type="match status" value="1"/>
</dbReference>
<proteinExistence type="evidence at transcript level"/>
<keyword id="KW-1185">Reference proteome</keyword>
<feature type="chain" id="PRO_0000283435" description="F-box protein At3g19880">
    <location>
        <begin position="1"/>
        <end position="389"/>
    </location>
</feature>
<feature type="domain" description="F-box">
    <location>
        <begin position="2"/>
        <end position="49"/>
    </location>
</feature>
<accession>Q9LT21</accession>
<sequence>MTMMSDLTQDLVEEILSRVPITSLGAVRSTCKGWNALSKERILCIGEPKQQFLGFMMLDYRLCSMRFNLHGILNEDFVSISMYQVETSQVFYCAGLLLCVTREKSSRLIIWNPYLGQTRWINTKTTKTGYNTYALGCDNNKNHKILKVFCDDYQCYYEIYDVKSNSWSAFNVTDPNWHIDYDICALVNGNTYFLTKERILVEDSDEDEDEVETPEILICFDFTAERFGKFLHLPFQFDIDFGDTGGLSCVKEEKLAVLLKRYDQNVIEIWVTTKIEPNVVFWKPFLKVDIETVLGALLDFQLDSFFIDEEKKLAVVFSSNKSKCYKTAYIIGEDRYLKEVDLGECKPLRSPIVCFSSYVPSLVQINQIAVPKRRENKRKRKSKGKGREV</sequence>
<organism>
    <name type="scientific">Arabidopsis thaliana</name>
    <name type="common">Mouse-ear cress</name>
    <dbReference type="NCBI Taxonomy" id="3702"/>
    <lineage>
        <taxon>Eukaryota</taxon>
        <taxon>Viridiplantae</taxon>
        <taxon>Streptophyta</taxon>
        <taxon>Embryophyta</taxon>
        <taxon>Tracheophyta</taxon>
        <taxon>Spermatophyta</taxon>
        <taxon>Magnoliopsida</taxon>
        <taxon>eudicotyledons</taxon>
        <taxon>Gunneridae</taxon>
        <taxon>Pentapetalae</taxon>
        <taxon>rosids</taxon>
        <taxon>malvids</taxon>
        <taxon>Brassicales</taxon>
        <taxon>Brassicaceae</taxon>
        <taxon>Camelineae</taxon>
        <taxon>Arabidopsis</taxon>
    </lineage>
</organism>